<organism>
    <name type="scientific">Rattus norvegicus</name>
    <name type="common">Rat</name>
    <dbReference type="NCBI Taxonomy" id="10116"/>
    <lineage>
        <taxon>Eukaryota</taxon>
        <taxon>Metazoa</taxon>
        <taxon>Chordata</taxon>
        <taxon>Craniata</taxon>
        <taxon>Vertebrata</taxon>
        <taxon>Euteleostomi</taxon>
        <taxon>Mammalia</taxon>
        <taxon>Eutheria</taxon>
        <taxon>Euarchontoglires</taxon>
        <taxon>Glires</taxon>
        <taxon>Rodentia</taxon>
        <taxon>Myomorpha</taxon>
        <taxon>Muroidea</taxon>
        <taxon>Muridae</taxon>
        <taxon>Murinae</taxon>
        <taxon>Rattus</taxon>
    </lineage>
</organism>
<proteinExistence type="evidence at transcript level"/>
<comment type="function">
    <text>Inhibits gastrointestinal motility and gastric acid secretion. Could function as a structural component of gastric mucus, possibly by stabilizing glycoproteins in the mucus gel through interactions with carbohydrate side chains.</text>
</comment>
<comment type="subcellular location">
    <subcellularLocation>
        <location>Secreted</location>
    </subcellularLocation>
</comment>
<comment type="tissue specificity">
    <text>Expressed in the digestive tract, where it was found predominantly in the stomach with highest expression in the antrum. It is secreted predominantly from antral mucous cells into the lumen of the gastrointestinal tract.</text>
</comment>
<name>TFF2_RAT</name>
<keyword id="KW-1015">Disulfide bond</keyword>
<keyword id="KW-0339">Growth factor</keyword>
<keyword id="KW-1185">Reference proteome</keyword>
<keyword id="KW-0677">Repeat</keyword>
<keyword id="KW-0964">Secreted</keyword>
<keyword id="KW-0732">Signal</keyword>
<reference key="1">
    <citation type="journal article" date="1994" name="Gastroenterology">
        <title>Spasmolytic polypeptide: a trefoil peptide secreted by rat gastric mucous cells.</title>
        <authorList>
            <person name="Jeffrey G.P."/>
            <person name="Oates P.S."/>
            <person name="Wang T.C."/>
            <person name="Babyatsky M.W."/>
            <person name="Brand S.J."/>
        </authorList>
    </citation>
    <scope>NUCLEOTIDE SEQUENCE [MRNA]</scope>
    <source>
        <tissue>Gastric antrum</tissue>
    </source>
</reference>
<gene>
    <name type="primary">Tff2</name>
    <name type="synonym">Sml1</name>
</gene>
<protein>
    <recommendedName>
        <fullName>Trefoil factor 2</fullName>
    </recommendedName>
    <alternativeName>
        <fullName>Spasmolytic polypeptide</fullName>
        <shortName>SP</shortName>
    </alternativeName>
</protein>
<accession>Q09030</accession>
<evidence type="ECO:0000255" key="1"/>
<evidence type="ECO:0000255" key="2">
    <source>
        <dbReference type="PROSITE-ProRule" id="PRU00779"/>
    </source>
</evidence>
<feature type="signal peptide" evidence="1">
    <location>
        <begin position="1"/>
        <end position="23"/>
    </location>
</feature>
<feature type="chain" id="PRO_0000023463" description="Trefoil factor 2">
    <location>
        <begin position="24"/>
        <end position="129"/>
    </location>
</feature>
<feature type="domain" description="P-type 1" evidence="2">
    <location>
        <begin position="29"/>
        <end position="73"/>
    </location>
</feature>
<feature type="domain" description="P-type 2" evidence="2">
    <location>
        <begin position="79"/>
        <end position="122"/>
    </location>
</feature>
<feature type="disulfide bond" evidence="2">
    <location>
        <begin position="29"/>
        <end position="127"/>
    </location>
</feature>
<feature type="disulfide bond" evidence="2">
    <location>
        <begin position="31"/>
        <end position="58"/>
    </location>
</feature>
<feature type="disulfide bond" evidence="2">
    <location>
        <begin position="42"/>
        <end position="57"/>
    </location>
</feature>
<feature type="disulfide bond" evidence="2">
    <location>
        <begin position="52"/>
        <end position="69"/>
    </location>
</feature>
<feature type="disulfide bond" evidence="2">
    <location>
        <begin position="81"/>
        <end position="107"/>
    </location>
</feature>
<feature type="disulfide bond" evidence="2">
    <location>
        <begin position="91"/>
        <end position="106"/>
    </location>
</feature>
<feature type="disulfide bond" evidence="2">
    <location>
        <begin position="101"/>
        <end position="118"/>
    </location>
</feature>
<sequence>MGPRGAPLLVVVLVLGLHALAEGEKPSPCRCSRMTPSNRKNCGFPGITSDQCFNLGCCFDSSVAGVPWCFHPLPNQASEQCVMEVSARENCGYPGISPEDCASRHCCFSNLIFEVPWCFFPQSVDDCHY</sequence>
<dbReference type="EMBL" id="M97255">
    <property type="protein sequence ID" value="AAA19025.1"/>
    <property type="molecule type" value="mRNA"/>
</dbReference>
<dbReference type="PIR" id="I53637">
    <property type="entry name" value="I53637"/>
</dbReference>
<dbReference type="RefSeq" id="NP_446296.1">
    <property type="nucleotide sequence ID" value="NM_053844.1"/>
</dbReference>
<dbReference type="SMR" id="Q09030"/>
<dbReference type="FunCoup" id="Q09030">
    <property type="interactions" value="3"/>
</dbReference>
<dbReference type="STRING" id="10116.ENSRNOP00000001537"/>
<dbReference type="PhosphoSitePlus" id="Q09030"/>
<dbReference type="PaxDb" id="10116-ENSRNOP00000001537"/>
<dbReference type="GeneID" id="116592"/>
<dbReference type="KEGG" id="rno:116592"/>
<dbReference type="UCSC" id="RGD:620709">
    <property type="organism name" value="rat"/>
</dbReference>
<dbReference type="AGR" id="RGD:620709"/>
<dbReference type="CTD" id="7032"/>
<dbReference type="RGD" id="620709">
    <property type="gene designation" value="Tff2"/>
</dbReference>
<dbReference type="eggNOG" id="ENOG502S5ZY">
    <property type="taxonomic scope" value="Eukaryota"/>
</dbReference>
<dbReference type="InParanoid" id="Q09030"/>
<dbReference type="PhylomeDB" id="Q09030"/>
<dbReference type="PRO" id="PR:Q09030"/>
<dbReference type="Proteomes" id="UP000002494">
    <property type="component" value="Unplaced"/>
</dbReference>
<dbReference type="GO" id="GO:0005615">
    <property type="term" value="C:extracellular space"/>
    <property type="evidence" value="ECO:0000266"/>
    <property type="project" value="RGD"/>
</dbReference>
<dbReference type="GO" id="GO:0031723">
    <property type="term" value="F:CXCR4 chemokine receptor binding"/>
    <property type="evidence" value="ECO:0000266"/>
    <property type="project" value="RGD"/>
</dbReference>
<dbReference type="GO" id="GO:0008083">
    <property type="term" value="F:growth factor activity"/>
    <property type="evidence" value="ECO:0007669"/>
    <property type="project" value="UniProtKB-KW"/>
</dbReference>
<dbReference type="GO" id="GO:0005198">
    <property type="term" value="F:structural molecule activity"/>
    <property type="evidence" value="ECO:0000303"/>
    <property type="project" value="RGD"/>
</dbReference>
<dbReference type="GO" id="GO:0019722">
    <property type="term" value="P:calcium-mediated signaling"/>
    <property type="evidence" value="ECO:0000266"/>
    <property type="project" value="RGD"/>
</dbReference>
<dbReference type="GO" id="GO:0008283">
    <property type="term" value="P:cell population proliferation"/>
    <property type="evidence" value="ECO:0000266"/>
    <property type="project" value="RGD"/>
</dbReference>
<dbReference type="GO" id="GO:0070098">
    <property type="term" value="P:chemokine-mediated signaling pathway"/>
    <property type="evidence" value="ECO:0000266"/>
    <property type="project" value="RGD"/>
</dbReference>
<dbReference type="GO" id="GO:0051649">
    <property type="term" value="P:establishment of localization in cell"/>
    <property type="evidence" value="ECO:0000266"/>
    <property type="project" value="RGD"/>
</dbReference>
<dbReference type="GO" id="GO:0001696">
    <property type="term" value="P:gastric acid secretion"/>
    <property type="evidence" value="ECO:0000266"/>
    <property type="project" value="RGD"/>
</dbReference>
<dbReference type="GO" id="GO:0042116">
    <property type="term" value="P:macrophage activation"/>
    <property type="evidence" value="ECO:0000266"/>
    <property type="project" value="RGD"/>
</dbReference>
<dbReference type="GO" id="GO:0030277">
    <property type="term" value="P:maintenance of gastrointestinal epithelium"/>
    <property type="evidence" value="ECO:0000318"/>
    <property type="project" value="GO_Central"/>
</dbReference>
<dbReference type="GO" id="GO:0060455">
    <property type="term" value="P:negative regulation of gastric acid secretion"/>
    <property type="evidence" value="ECO:0000266"/>
    <property type="project" value="RGD"/>
</dbReference>
<dbReference type="GO" id="GO:0050728">
    <property type="term" value="P:negative regulation of inflammatory response"/>
    <property type="evidence" value="ECO:0000266"/>
    <property type="project" value="RGD"/>
</dbReference>
<dbReference type="GO" id="GO:0043031">
    <property type="term" value="P:negative regulation of macrophage activation"/>
    <property type="evidence" value="ECO:0000266"/>
    <property type="project" value="RGD"/>
</dbReference>
<dbReference type="GO" id="GO:0008284">
    <property type="term" value="P:positive regulation of cell population proliferation"/>
    <property type="evidence" value="ECO:0000266"/>
    <property type="project" value="RGD"/>
</dbReference>
<dbReference type="GO" id="GO:0070374">
    <property type="term" value="P:positive regulation of ERK1 and ERK2 cascade"/>
    <property type="evidence" value="ECO:0000266"/>
    <property type="project" value="RGD"/>
</dbReference>
<dbReference type="GO" id="GO:0030334">
    <property type="term" value="P:regulation of cell migration"/>
    <property type="evidence" value="ECO:0000266"/>
    <property type="project" value="RGD"/>
</dbReference>
<dbReference type="CDD" id="cd00111">
    <property type="entry name" value="Trefoil"/>
    <property type="match status" value="2"/>
</dbReference>
<dbReference type="FunFam" id="4.10.110.10:FF:000005">
    <property type="entry name" value="Trefoil factor 2"/>
    <property type="match status" value="1"/>
</dbReference>
<dbReference type="FunFam" id="4.10.110.10:FF:000001">
    <property type="entry name" value="Trefoil factor 3"/>
    <property type="match status" value="1"/>
</dbReference>
<dbReference type="Gene3D" id="4.10.110.10">
    <property type="entry name" value="Spasmolytic Protein, domain 1"/>
    <property type="match status" value="2"/>
</dbReference>
<dbReference type="InterPro" id="IPR017994">
    <property type="entry name" value="P_trefoil_chordata"/>
</dbReference>
<dbReference type="InterPro" id="IPR017957">
    <property type="entry name" value="P_trefoil_CS"/>
</dbReference>
<dbReference type="InterPro" id="IPR000519">
    <property type="entry name" value="P_trefoil_dom"/>
</dbReference>
<dbReference type="InterPro" id="IPR044913">
    <property type="entry name" value="P_trefoil_dom_sf"/>
</dbReference>
<dbReference type="PANTHER" id="PTHR13826">
    <property type="entry name" value="INTESTINAL TREFOIL FACTOR-RELATED"/>
    <property type="match status" value="1"/>
</dbReference>
<dbReference type="PANTHER" id="PTHR13826:SF17">
    <property type="entry name" value="TREFOIL FACTOR 2"/>
    <property type="match status" value="1"/>
</dbReference>
<dbReference type="Pfam" id="PF00088">
    <property type="entry name" value="Trefoil"/>
    <property type="match status" value="2"/>
</dbReference>
<dbReference type="PRINTS" id="PR00680">
    <property type="entry name" value="PTREFOIL"/>
</dbReference>
<dbReference type="SMART" id="SM00018">
    <property type="entry name" value="PD"/>
    <property type="match status" value="2"/>
</dbReference>
<dbReference type="SUPFAM" id="SSF57492">
    <property type="entry name" value="Trefoil"/>
    <property type="match status" value="2"/>
</dbReference>
<dbReference type="PROSITE" id="PS00025">
    <property type="entry name" value="P_TREFOIL_1"/>
    <property type="match status" value="2"/>
</dbReference>
<dbReference type="PROSITE" id="PS51448">
    <property type="entry name" value="P_TREFOIL_2"/>
    <property type="match status" value="2"/>
</dbReference>